<reference key="1">
    <citation type="journal article" date="2011" name="Biochem. Soc. Trans.">
        <title>In vitro proof of direct regulation of glutamine synthetase by GlnK proteins in the extreme halophilic archaeon Haloferax mediterranei.</title>
        <authorList>
            <person name="Pedro-Roig L."/>
            <person name="Camacho M."/>
            <person name="Bonete M.J."/>
        </authorList>
    </citation>
    <scope>NUCLEOTIDE SEQUENCE [GENOMIC DNA]</scope>
    <scope>FUNCTION</scope>
    <scope>SUBCELLULAR LOCATION</scope>
    <source>
        <strain>ATCC 33500 / DSM 1411 / JCM 8866 / NBRC 14739 / NCIMB 2177 / R-4</strain>
    </source>
</reference>
<reference key="2">
    <citation type="journal article" date="2012" name="J. Bacteriol.">
        <title>Complete genome sequence of the metabolically versatile halophilic archaeon Haloferax mediterranei, a poly(3-hydroxybutyrate-co-3-hydroxyvalerate) producer.</title>
        <authorList>
            <person name="Han J."/>
            <person name="Zhang F."/>
            <person name="Hou J."/>
            <person name="Liu X."/>
            <person name="Li M."/>
            <person name="Liu H."/>
            <person name="Cai L."/>
            <person name="Zhang B."/>
            <person name="Chen Y."/>
            <person name="Zhou J."/>
            <person name="Hu S."/>
            <person name="Xiang H."/>
        </authorList>
    </citation>
    <scope>NUCLEOTIDE SEQUENCE [LARGE SCALE GENOMIC DNA]</scope>
    <source>
        <strain>ATCC 33500 / DSM 1411 / JCM 8866 / NBRC 14739 / NCIMB 2177 / R-4</strain>
    </source>
</reference>
<reference key="3">
    <citation type="journal article" date="2014" name="PLoS Genet.">
        <title>Phylogenetically driven sequencing of extremely halophilic archaea reveals strategies for static and dynamic osmo-response.</title>
        <authorList>
            <person name="Becker E.A."/>
            <person name="Seitzer P.M."/>
            <person name="Tritt A."/>
            <person name="Larsen D."/>
            <person name="Krusor M."/>
            <person name="Yao A.I."/>
            <person name="Wu D."/>
            <person name="Madern D."/>
            <person name="Eisen J.A."/>
            <person name="Darling A.E."/>
            <person name="Facciotti M.T."/>
        </authorList>
    </citation>
    <scope>NUCLEOTIDE SEQUENCE [LARGE SCALE GENOMIC DNA]</scope>
    <source>
        <strain>ATCC 33500 / DSM 1411 / JCM 8866 / NBRC 14739 / NCIMB 2177 / R-4</strain>
    </source>
</reference>
<reference key="4">
    <citation type="submission" date="2014-04" db="EMBL/GenBank/DDBJ databases">
        <title>Transcriptional profiles of Haloferax mediterranei on the basis of nitrogen availability.</title>
        <authorList>
            <person name="Bautista V."/>
        </authorList>
    </citation>
    <scope>NUCLEOTIDE SEQUENCE [LARGE SCALE GENOMIC DNA]</scope>
    <source>
        <strain>ATCC 33500 / DSM 1411 / JCM 8866 / NBRC 14739 / NCIMB 2177 / R-4</strain>
    </source>
</reference>
<reference key="5">
    <citation type="submission" date="2019-04" db="EMBL/GenBank/DDBJ databases">
        <title>Methylomes of two halophilic Archaea, Haloarcula marismortui and Haloferax mediterranei.</title>
        <authorList>
            <person name="DasSarma S."/>
            <person name="DasSarma P."/>
            <person name="DasSarma S."/>
            <person name="Fomenkov A."/>
            <person name="Vincze T."/>
            <person name="Anton B.P."/>
            <person name="Roberts R.J."/>
        </authorList>
    </citation>
    <scope>NUCLEOTIDE SEQUENCE [LARGE SCALE GENOMIC DNA]</scope>
    <source>
        <strain>ATCC 33500 / DSM 1411 / JCM 8866 / NBRC 14739 / NCIMB 2177 / R-4</strain>
    </source>
</reference>
<reference key="6">
    <citation type="journal article" date="2013" name="Biochim. Biophys. Acta">
        <title>Regulation of ammonium assimilation in Haloferax mediterranei: interaction between glutamine synthetase and two GlnK proteins.</title>
        <authorList>
            <person name="Pedro-Roig L."/>
            <person name="Camacho M."/>
            <person name="Bonete M.J."/>
        </authorList>
    </citation>
    <scope>FUNCTION</scope>
    <scope>SUBUNIT</scope>
    <scope>INTERACTION WITH GLNA3</scope>
    <source>
        <strain>ATCC 33500 / DSM 1411 / JCM 8866 / NBRC 14739 / NCIMB 2177 / R-4</strain>
    </source>
</reference>
<reference key="7">
    <citation type="journal article" date="2013" name="Proteomics">
        <title>Haloferax mediterranei GlnK proteins are post-translationally modified by uridylylation.</title>
        <authorList>
            <person name="Pedro-Roig L."/>
            <person name="Camacho M."/>
            <person name="Bonete M.J."/>
        </authorList>
    </citation>
    <scope>FUNCTION</scope>
    <scope>URIDYLYLATION AT TYR-62</scope>
</reference>
<reference key="8">
    <citation type="journal article" date="2013" name="MicrobiologyOpen">
        <title>Nitrogen regulation of protein-protein interactions and transcript levels of GlnK PII regulator and AmtB ammonium transporter homologs in Archaea.</title>
        <authorList>
            <person name="Pedro-Roig L."/>
            <person name="Lange C."/>
            <person name="Bonete M.J."/>
            <person name="Soppa J."/>
            <person name="Maupin-Furlow J."/>
        </authorList>
    </citation>
    <scope>INTERACTION WITH AMT1</scope>
    <scope>INDUCTION</scope>
    <source>
        <strain>ATCC 33500 / DSM 1411 / JCM 8866 / NBRC 14739 / NCIMB 2177 / R-4</strain>
    </source>
</reference>
<reference evidence="14 15 16" key="9">
    <citation type="journal article" date="2014" name="FEBS J.">
        <title>The structure of a PII signaling protein from a halophilic archaeon reveals novel traits and high-salt adaptations.</title>
        <authorList>
            <person name="Palanca C."/>
            <person name="Pedro-Roig L."/>
            <person name="Llacer J.L."/>
            <person name="Camacho M."/>
            <person name="Bonete M.J."/>
            <person name="Rubio V."/>
        </authorList>
    </citation>
    <scope>X-RAY CRYSTALLOGRAPHY (1.45 ANGSTROMS) IN COMPLEXES WITH ADP; AMP AND ATP</scope>
    <scope>ACTIVITY REGULATION</scope>
    <scope>SUBUNIT</scope>
</reference>
<gene>
    <name evidence="8" type="primary">glnK2</name>
    <name evidence="10" type="ordered locus">HFX_0092</name>
    <name evidence="11" type="ORF">BM92_08825</name>
    <name evidence="12" type="ORF">C439_09930</name>
    <name evidence="13" type="ORF">E6P09_03555</name>
</gene>
<dbReference type="EMBL" id="FM991872">
    <property type="protein sequence ID" value="CAX20371.1"/>
    <property type="molecule type" value="Genomic_DNA"/>
</dbReference>
<dbReference type="EMBL" id="CP001868">
    <property type="protein sequence ID" value="AFK17834.1"/>
    <property type="molecule type" value="Genomic_DNA"/>
</dbReference>
<dbReference type="EMBL" id="AOLO01000007">
    <property type="protein sequence ID" value="EMA02893.1"/>
    <property type="molecule type" value="Genomic_DNA"/>
</dbReference>
<dbReference type="EMBL" id="CP007551">
    <property type="protein sequence ID" value="AHZ22740.1"/>
    <property type="molecule type" value="Genomic_DNA"/>
</dbReference>
<dbReference type="EMBL" id="CP039139">
    <property type="protein sequence ID" value="QCQ74395.1"/>
    <property type="molecule type" value="Genomic_DNA"/>
</dbReference>
<dbReference type="RefSeq" id="WP_004058652.1">
    <property type="nucleotide sequence ID" value="NC_017941.2"/>
</dbReference>
<dbReference type="PDB" id="4OZJ">
    <property type="method" value="X-ray"/>
    <property type="resolution" value="1.45 A"/>
    <property type="chains" value="A=1-123"/>
</dbReference>
<dbReference type="PDB" id="4OZL">
    <property type="method" value="X-ray"/>
    <property type="resolution" value="1.49 A"/>
    <property type="chains" value="A=1-119"/>
</dbReference>
<dbReference type="PDB" id="4OZN">
    <property type="method" value="X-ray"/>
    <property type="resolution" value="2.60 A"/>
    <property type="chains" value="A/B/C=1-123"/>
</dbReference>
<dbReference type="PDBsum" id="4OZJ"/>
<dbReference type="PDBsum" id="4OZL"/>
<dbReference type="PDBsum" id="4OZN"/>
<dbReference type="SMR" id="B8ZYW1"/>
<dbReference type="MINT" id="B8ZYW1"/>
<dbReference type="STRING" id="523841.HFX_0092"/>
<dbReference type="PaxDb" id="523841-HFX_0092"/>
<dbReference type="GeneID" id="71760034"/>
<dbReference type="KEGG" id="hme:HFX_0092"/>
<dbReference type="PATRIC" id="fig|523841.21.peg.2019"/>
<dbReference type="eggNOG" id="arCOG02305">
    <property type="taxonomic scope" value="Archaea"/>
</dbReference>
<dbReference type="HOGENOM" id="CLU_082268_0_1_2"/>
<dbReference type="OrthoDB" id="10960at2157"/>
<dbReference type="EvolutionaryTrace" id="B8ZYW1"/>
<dbReference type="Proteomes" id="UP000006469">
    <property type="component" value="Chromosome"/>
</dbReference>
<dbReference type="Proteomes" id="UP000011603">
    <property type="component" value="Unassembled WGS sequence"/>
</dbReference>
<dbReference type="Proteomes" id="UP000027075">
    <property type="component" value="Chromosome"/>
</dbReference>
<dbReference type="Proteomes" id="UP000299011">
    <property type="component" value="Chromosome"/>
</dbReference>
<dbReference type="GO" id="GO:0005829">
    <property type="term" value="C:cytosol"/>
    <property type="evidence" value="ECO:0007669"/>
    <property type="project" value="TreeGrafter"/>
</dbReference>
<dbReference type="GO" id="GO:0005524">
    <property type="term" value="F:ATP binding"/>
    <property type="evidence" value="ECO:0007669"/>
    <property type="project" value="UniProtKB-KW"/>
</dbReference>
<dbReference type="GO" id="GO:0030234">
    <property type="term" value="F:enzyme regulator activity"/>
    <property type="evidence" value="ECO:0007669"/>
    <property type="project" value="InterPro"/>
</dbReference>
<dbReference type="GO" id="GO:0006808">
    <property type="term" value="P:regulation of nitrogen utilization"/>
    <property type="evidence" value="ECO:0007669"/>
    <property type="project" value="InterPro"/>
</dbReference>
<dbReference type="Gene3D" id="3.30.70.120">
    <property type="match status" value="1"/>
</dbReference>
<dbReference type="InterPro" id="IPR002187">
    <property type="entry name" value="N-reg_PII"/>
</dbReference>
<dbReference type="InterPro" id="IPR011322">
    <property type="entry name" value="N-reg_PII-like_a/b"/>
</dbReference>
<dbReference type="InterPro" id="IPR015867">
    <property type="entry name" value="N-reg_PII/ATP_PRibTrfase_C"/>
</dbReference>
<dbReference type="InterPro" id="IPR017918">
    <property type="entry name" value="N-reg_PII_CS"/>
</dbReference>
<dbReference type="PANTHER" id="PTHR30115">
    <property type="entry name" value="NITROGEN REGULATORY PROTEIN P-II"/>
    <property type="match status" value="1"/>
</dbReference>
<dbReference type="PANTHER" id="PTHR30115:SF11">
    <property type="entry name" value="NITROGEN REGULATORY PROTEIN P-II HOMOLOG"/>
    <property type="match status" value="1"/>
</dbReference>
<dbReference type="Pfam" id="PF00543">
    <property type="entry name" value="P-II"/>
    <property type="match status" value="1"/>
</dbReference>
<dbReference type="PRINTS" id="PR00340">
    <property type="entry name" value="PIIGLNB"/>
</dbReference>
<dbReference type="SMART" id="SM00938">
    <property type="entry name" value="P-II"/>
    <property type="match status" value="1"/>
</dbReference>
<dbReference type="SUPFAM" id="SSF54913">
    <property type="entry name" value="GlnB-like"/>
    <property type="match status" value="1"/>
</dbReference>
<dbReference type="PROSITE" id="PS00638">
    <property type="entry name" value="PII_GLNB_CTER"/>
    <property type="match status" value="1"/>
</dbReference>
<dbReference type="PROSITE" id="PS51343">
    <property type="entry name" value="PII_GLNB_DOM"/>
    <property type="match status" value="1"/>
</dbReference>
<protein>
    <recommendedName>
        <fullName evidence="9">Nitrogen regulatory protein GlnK2</fullName>
    </recommendedName>
</protein>
<comment type="function">
    <text evidence="1 3 4 5">Involved in the regulation of nitrogen metabolism (PubMed:21265784, PubMed:23420616). Regulates the activity of its targets by protein-protein interaction in response to the nitrogen status of the cell (PubMed:23069245). Increases the activity of the glutamine synthetase 3 in the presence of 2-oxoglutarate (PubMed:23069245). May regulate the activity of the ammonia channel Amt2 via direct interaction (By similarity).</text>
</comment>
<comment type="activity regulation">
    <text evidence="7">Binds the effectors ADP and ATP. Also binds AMP with high affinity, raising the possibility that AMP could be an important PII effector, at least in archaea. The change in the ATP/AMP ratio may be more relevant for describing the energy status in the cells than the ATP/ADP ratio alone.</text>
</comment>
<comment type="subunit">
    <text evidence="4 6 7">Homotrimer (PubMed:23069245, PubMed:24946894). Interacts with the glutamine synthetase 3 (GS3) in the presence of 2-oxoglutarate (PubMed:23069245). Interacts in vitro with Amt1 after ammonium shock (PubMed:24039236). May also interact with Amt2 (PubMed:24039236).</text>
</comment>
<comment type="subcellular location">
    <subcellularLocation>
        <location evidence="3">Cytoplasm</location>
    </subcellularLocation>
</comment>
<comment type="induction">
    <text evidence="6">Expressed during ammonium starvation under nitrate-rich conditions.</text>
</comment>
<comment type="PTM">
    <text evidence="5">Uridylylated on Tyr-62.</text>
</comment>
<comment type="similarity">
    <text evidence="2">Belongs to the P(II) protein family.</text>
</comment>
<accession>B8ZYW1</accession>
<keyword id="KW-0002">3D-structure</keyword>
<keyword id="KW-0067">ATP-binding</keyword>
<keyword id="KW-0963">Cytoplasm</keyword>
<keyword id="KW-0547">Nucleotide-binding</keyword>
<keyword id="KW-0597">Phosphoprotein</keyword>
<evidence type="ECO:0000250" key="1">
    <source>
        <dbReference type="UniProtKB" id="B8ZYW0"/>
    </source>
</evidence>
<evidence type="ECO:0000255" key="2">
    <source>
        <dbReference type="PROSITE-ProRule" id="PRU00675"/>
    </source>
</evidence>
<evidence type="ECO:0000269" key="3">
    <source>
    </source>
</evidence>
<evidence type="ECO:0000269" key="4">
    <source>
    </source>
</evidence>
<evidence type="ECO:0000269" key="5">
    <source>
    </source>
</evidence>
<evidence type="ECO:0000269" key="6">
    <source>
    </source>
</evidence>
<evidence type="ECO:0000269" key="7">
    <source>
    </source>
</evidence>
<evidence type="ECO:0000303" key="8">
    <source>
    </source>
</evidence>
<evidence type="ECO:0000305" key="9"/>
<evidence type="ECO:0000312" key="10">
    <source>
        <dbReference type="EMBL" id="AFK17834.1"/>
    </source>
</evidence>
<evidence type="ECO:0000312" key="11">
    <source>
        <dbReference type="EMBL" id="AHZ22740.1"/>
    </source>
</evidence>
<evidence type="ECO:0000312" key="12">
    <source>
        <dbReference type="EMBL" id="EMA02893.1"/>
    </source>
</evidence>
<evidence type="ECO:0000312" key="13">
    <source>
        <dbReference type="EMBL" id="QCQ74395.1"/>
    </source>
</evidence>
<evidence type="ECO:0007744" key="14">
    <source>
        <dbReference type="PDB" id="4OZJ"/>
    </source>
</evidence>
<evidence type="ECO:0007744" key="15">
    <source>
        <dbReference type="PDB" id="4OZL"/>
    </source>
</evidence>
<evidence type="ECO:0007744" key="16">
    <source>
        <dbReference type="PDB" id="4OZN"/>
    </source>
</evidence>
<evidence type="ECO:0007829" key="17">
    <source>
        <dbReference type="PDB" id="4OZJ"/>
    </source>
</evidence>
<evidence type="ECO:0007829" key="18">
    <source>
        <dbReference type="PDB" id="4OZN"/>
    </source>
</evidence>
<sequence>MSDADLPNDGGIKLVMAIIRPDKLADVKTALAEVGAPSLTVTNVSGRGSQPAKKSQWRGEEYTVDLHQKVKVECVVADTPAEDVADAIADAAHTGEKGDGKIFILPVENAIQVRTGKTGRDAV</sequence>
<name>GLNK2_HALMT</name>
<proteinExistence type="evidence at protein level"/>
<feature type="chain" id="PRO_0000453016" description="Nitrogen regulatory protein GlnK2">
    <location>
        <begin position="1"/>
        <end position="123"/>
    </location>
</feature>
<feature type="binding site" evidence="16">
    <location>
        <begin position="38"/>
        <end position="40"/>
    </location>
    <ligand>
        <name>ATP</name>
        <dbReference type="ChEBI" id="CHEBI:30616"/>
    </ligand>
</feature>
<feature type="binding site" evidence="14">
    <location>
        <position position="49"/>
    </location>
    <ligand>
        <name>ADP</name>
        <dbReference type="ChEBI" id="CHEBI:456216"/>
    </ligand>
</feature>
<feature type="binding site" evidence="14">
    <location>
        <position position="49"/>
    </location>
    <ligand>
        <name>ATP</name>
        <dbReference type="ChEBI" id="CHEBI:30616"/>
    </ligand>
</feature>
<feature type="binding site" evidence="16">
    <location>
        <position position="75"/>
    </location>
    <ligand>
        <name>ATP</name>
        <dbReference type="ChEBI" id="CHEBI:30616"/>
    </ligand>
</feature>
<feature type="binding site" evidence="14">
    <location>
        <begin position="98"/>
        <end position="101"/>
    </location>
    <ligand>
        <name>ADP</name>
        <dbReference type="ChEBI" id="CHEBI:456216"/>
    </ligand>
</feature>
<feature type="binding site" evidence="15">
    <location>
        <begin position="98"/>
        <end position="101"/>
    </location>
    <ligand>
        <name>AMP</name>
        <dbReference type="ChEBI" id="CHEBI:456215"/>
    </ligand>
</feature>
<feature type="binding site" evidence="16">
    <location>
        <begin position="98"/>
        <end position="101"/>
    </location>
    <ligand>
        <name>ATP</name>
        <dbReference type="ChEBI" id="CHEBI:30616"/>
    </ligand>
</feature>
<feature type="binding site" evidence="16">
    <location>
        <position position="114"/>
    </location>
    <ligand>
        <name>ATP</name>
        <dbReference type="ChEBI" id="CHEBI:30616"/>
    </ligand>
</feature>
<feature type="modified residue" description="O-UMP-tyrosine" evidence="2 5">
    <location>
        <position position="62"/>
    </location>
</feature>
<feature type="helix" evidence="17">
    <location>
        <begin position="7"/>
        <end position="10"/>
    </location>
</feature>
<feature type="strand" evidence="17">
    <location>
        <begin position="11"/>
        <end position="19"/>
    </location>
</feature>
<feature type="helix" evidence="17">
    <location>
        <begin position="21"/>
        <end position="23"/>
    </location>
</feature>
<feature type="helix" evidence="17">
    <location>
        <begin position="24"/>
        <end position="34"/>
    </location>
</feature>
<feature type="strand" evidence="17">
    <location>
        <begin position="40"/>
        <end position="46"/>
    </location>
</feature>
<feature type="helix" evidence="18">
    <location>
        <begin position="56"/>
        <end position="64"/>
    </location>
</feature>
<feature type="strand" evidence="17">
    <location>
        <begin position="67"/>
        <end position="79"/>
    </location>
</feature>
<feature type="helix" evidence="17">
    <location>
        <begin position="81"/>
        <end position="92"/>
    </location>
</feature>
<feature type="strand" evidence="17">
    <location>
        <begin position="101"/>
        <end position="107"/>
    </location>
</feature>
<feature type="strand" evidence="18">
    <location>
        <begin position="109"/>
        <end position="112"/>
    </location>
</feature>
<feature type="turn" evidence="17">
    <location>
        <begin position="113"/>
        <end position="115"/>
    </location>
</feature>
<feature type="helix" evidence="17">
    <location>
        <begin position="120"/>
        <end position="122"/>
    </location>
</feature>
<organism>
    <name type="scientific">Haloferax mediterranei (strain ATCC 33500 / DSM 1411 / JCM 8866 / NBRC 14739 / NCIMB 2177 / R-4)</name>
    <name type="common">Halobacterium mediterranei</name>
    <dbReference type="NCBI Taxonomy" id="523841"/>
    <lineage>
        <taxon>Archaea</taxon>
        <taxon>Methanobacteriati</taxon>
        <taxon>Methanobacteriota</taxon>
        <taxon>Stenosarchaea group</taxon>
        <taxon>Halobacteria</taxon>
        <taxon>Halobacteriales</taxon>
        <taxon>Haloferacaceae</taxon>
        <taxon>Haloferax</taxon>
    </lineage>
</organism>